<proteinExistence type="inferred from homology"/>
<sequence length="521" mass="55020">MASALADAMTSSGRDLVVLDHGGWRRHPWAEVHQRAENIAARITEDAATVVVLVGEPTVEFIAAIPGTLYAGAALSILPGPVRGADLGQWARNTMQRCASIGVRLVFSHGEHLDALRATPASIPTCDVTETGHARRDSSFTPPDHGEFAVLQGTAGSTGIPRTAQLSPEAVLANLRGLVACIDITPADTGCSWLPLYHDMGLAFLLTNALGGAELWQAPTTAFSASPFSWLQWMTESTATLTAAPNMAYGLIGKYGSRLTDFDLGALRFALNGGEPVDCQGYRRFATEMARFGLDPSALVPAYGLAESSCAVTVPILGSGLQVDEVQVSSDDGRFIRTHAVVGEPIPGMQVRIAPTDGSGEQVDGRDFGEIEVRGTSLMSGYLGEPPLEAGSWFPTGDLGYFVDSGLVVCGRAKELITVAGRNIFPAEVERVAAQVQGVREGAVVAVGTDESAVRPGLVIAAEFRGTDEPAARTELVQRVASECGVVPSNVVFLEPGALPRTSSGKLRRLEVKRSMEDVNR</sequence>
<protein>
    <recommendedName>
        <fullName evidence="1">Medium/long-chain-fatty-acid--[acyl-carrier-protein] ligase MbtM</fullName>
        <ecNumber evidence="1">6.2.1.20</ecNumber>
        <ecNumber evidence="1">6.2.1.47</ecNumber>
    </recommendedName>
    <alternativeName>
        <fullName evidence="1">Fatty acyl-[acyl-carrier-protein] synthetase</fullName>
        <shortName evidence="1">Fatty acyl-ACP synthetase</shortName>
    </alternativeName>
    <alternativeName>
        <fullName evidence="1">Mycobactin synthetase protein M</fullName>
    </alternativeName>
</protein>
<gene>
    <name type="primary">mbtM</name>
    <name type="ordered locus">Mmcs_1723</name>
</gene>
<feature type="chain" id="PRO_0000278305" description="Medium/long-chain-fatty-acid--[acyl-carrier-protein] ligase MbtM">
    <location>
        <begin position="1"/>
        <end position="521"/>
    </location>
</feature>
<dbReference type="EC" id="6.2.1.20" evidence="1"/>
<dbReference type="EC" id="6.2.1.47" evidence="1"/>
<dbReference type="EMBL" id="CP000384">
    <property type="protein sequence ID" value="ABG07832.1"/>
    <property type="molecule type" value="Genomic_DNA"/>
</dbReference>
<dbReference type="SMR" id="Q1BBA2"/>
<dbReference type="KEGG" id="mmc:Mmcs_1723"/>
<dbReference type="HOGENOM" id="CLU_000022_23_7_11"/>
<dbReference type="BioCyc" id="MSP164756:G1G6O-1764-MONOMER"/>
<dbReference type="UniPathway" id="UPA00011"/>
<dbReference type="GO" id="GO:0005886">
    <property type="term" value="C:plasma membrane"/>
    <property type="evidence" value="ECO:0007669"/>
    <property type="project" value="TreeGrafter"/>
</dbReference>
<dbReference type="GO" id="GO:0070566">
    <property type="term" value="F:adenylyltransferase activity"/>
    <property type="evidence" value="ECO:0007669"/>
    <property type="project" value="TreeGrafter"/>
</dbReference>
<dbReference type="GO" id="GO:0005524">
    <property type="term" value="F:ATP binding"/>
    <property type="evidence" value="ECO:0007669"/>
    <property type="project" value="UniProtKB-KW"/>
</dbReference>
<dbReference type="GO" id="GO:0008922">
    <property type="term" value="F:long-chain fatty acid [acyl-carrier-protein] ligase activity"/>
    <property type="evidence" value="ECO:0007669"/>
    <property type="project" value="UniProtKB-EC"/>
</dbReference>
<dbReference type="GO" id="GO:0006633">
    <property type="term" value="P:fatty acid biosynthetic process"/>
    <property type="evidence" value="ECO:0007669"/>
    <property type="project" value="TreeGrafter"/>
</dbReference>
<dbReference type="CDD" id="cd05931">
    <property type="entry name" value="FAAL"/>
    <property type="match status" value="1"/>
</dbReference>
<dbReference type="Gene3D" id="3.30.300.30">
    <property type="match status" value="1"/>
</dbReference>
<dbReference type="Gene3D" id="3.40.50.12780">
    <property type="entry name" value="N-terminal domain of ligase-like"/>
    <property type="match status" value="1"/>
</dbReference>
<dbReference type="InterPro" id="IPR045851">
    <property type="entry name" value="AMP-bd_C_sf"/>
</dbReference>
<dbReference type="InterPro" id="IPR020845">
    <property type="entry name" value="AMP-binding_CS"/>
</dbReference>
<dbReference type="InterPro" id="IPR000873">
    <property type="entry name" value="AMP-dep_synth/lig_dom"/>
</dbReference>
<dbReference type="InterPro" id="IPR042099">
    <property type="entry name" value="ANL_N_sf"/>
</dbReference>
<dbReference type="InterPro" id="IPR040097">
    <property type="entry name" value="FAAL/FAAC"/>
</dbReference>
<dbReference type="NCBIfam" id="NF004510">
    <property type="entry name" value="PRK05851.1"/>
    <property type="match status" value="1"/>
</dbReference>
<dbReference type="PANTHER" id="PTHR22754:SF32">
    <property type="entry name" value="DISCO-INTERACTING PROTEIN 2"/>
    <property type="match status" value="1"/>
</dbReference>
<dbReference type="PANTHER" id="PTHR22754">
    <property type="entry name" value="DISCO-INTERACTING PROTEIN 2 DIP2 -RELATED"/>
    <property type="match status" value="1"/>
</dbReference>
<dbReference type="Pfam" id="PF00501">
    <property type="entry name" value="AMP-binding"/>
    <property type="match status" value="1"/>
</dbReference>
<dbReference type="SUPFAM" id="SSF56801">
    <property type="entry name" value="Acetyl-CoA synthetase-like"/>
    <property type="match status" value="1"/>
</dbReference>
<dbReference type="PROSITE" id="PS00455">
    <property type="entry name" value="AMP_BINDING"/>
    <property type="match status" value="1"/>
</dbReference>
<organism>
    <name type="scientific">Mycobacterium sp. (strain MCS)</name>
    <dbReference type="NCBI Taxonomy" id="164756"/>
    <lineage>
        <taxon>Bacteria</taxon>
        <taxon>Bacillati</taxon>
        <taxon>Actinomycetota</taxon>
        <taxon>Actinomycetes</taxon>
        <taxon>Mycobacteriales</taxon>
        <taxon>Mycobacteriaceae</taxon>
        <taxon>Mycobacterium</taxon>
    </lineage>
</organism>
<accession>Q1BBA2</accession>
<reference key="1">
    <citation type="submission" date="2006-06" db="EMBL/GenBank/DDBJ databases">
        <title>Complete sequence of chromosome of Mycobacterium sp. MCS.</title>
        <authorList>
            <consortium name="US DOE Joint Genome Institute"/>
            <person name="Copeland A."/>
            <person name="Lucas S."/>
            <person name="Lapidus A."/>
            <person name="Barry K."/>
            <person name="Detter J.C."/>
            <person name="Glavina del Rio T."/>
            <person name="Hammon N."/>
            <person name="Israni S."/>
            <person name="Dalin E."/>
            <person name="Tice H."/>
            <person name="Pitluck S."/>
            <person name="Martinez M."/>
            <person name="Schmutz J."/>
            <person name="Larimer F."/>
            <person name="Land M."/>
            <person name="Hauser L."/>
            <person name="Kyrpides N."/>
            <person name="Kim E."/>
            <person name="Miller C.D."/>
            <person name="Hughes J.E."/>
            <person name="Anderson A.J."/>
            <person name="Sims R.C."/>
            <person name="Richardson P."/>
        </authorList>
    </citation>
    <scope>NUCLEOTIDE SEQUENCE [LARGE SCALE GENOMIC DNA]</scope>
    <source>
        <strain>MCS</strain>
    </source>
</reference>
<keyword id="KW-0067">ATP-binding</keyword>
<keyword id="KW-0436">Ligase</keyword>
<keyword id="KW-0547">Nucleotide-binding</keyword>
<comment type="function">
    <text evidence="1">Activates lipidic moieties required for mycobactin biosynthesis. Converts medium- to long-chain aliphatic fatty acids into acyl adenylate, which is further transferred on to the phosphopantetheine arm of the carrier protein MbtL.</text>
</comment>
<comment type="catalytic activity">
    <reaction evidence="1">
        <text>a long-chain fatty acid + holo-[ACP] + ATP = a long-chain fatty acyl-[ACP] + AMP + diphosphate</text>
        <dbReference type="Rhea" id="RHEA:45588"/>
        <dbReference type="Rhea" id="RHEA-COMP:9685"/>
        <dbReference type="Rhea" id="RHEA-COMP:12682"/>
        <dbReference type="ChEBI" id="CHEBI:30616"/>
        <dbReference type="ChEBI" id="CHEBI:33019"/>
        <dbReference type="ChEBI" id="CHEBI:57560"/>
        <dbReference type="ChEBI" id="CHEBI:64479"/>
        <dbReference type="ChEBI" id="CHEBI:133243"/>
        <dbReference type="ChEBI" id="CHEBI:456215"/>
        <dbReference type="EC" id="6.2.1.20"/>
    </reaction>
</comment>
<comment type="catalytic activity">
    <reaction evidence="1">
        <text>a medium-chain fatty acid + holo-[ACP] + ATP = a medium-chain fatty acyl-[ACP] + AMP + diphosphate</text>
        <dbReference type="Rhea" id="RHEA:50460"/>
        <dbReference type="Rhea" id="RHEA-COMP:9685"/>
        <dbReference type="Rhea" id="RHEA-COMP:12681"/>
        <dbReference type="ChEBI" id="CHEBI:30616"/>
        <dbReference type="ChEBI" id="CHEBI:33019"/>
        <dbReference type="ChEBI" id="CHEBI:59558"/>
        <dbReference type="ChEBI" id="CHEBI:64479"/>
        <dbReference type="ChEBI" id="CHEBI:133242"/>
        <dbReference type="ChEBI" id="CHEBI:456215"/>
        <dbReference type="EC" id="6.2.1.47"/>
    </reaction>
</comment>
<comment type="pathway">
    <text evidence="1">Siderophore biosynthesis; mycobactin biosynthesis.</text>
</comment>
<comment type="similarity">
    <text evidence="2">Belongs to the ATP-dependent AMP-binding enzyme family.</text>
</comment>
<evidence type="ECO:0000250" key="1">
    <source>
        <dbReference type="UniProtKB" id="A0QUA1"/>
    </source>
</evidence>
<evidence type="ECO:0000305" key="2"/>
<name>MBTM_MYCSS</name>